<keyword id="KW-0030">Aminoacyl-tRNA synthetase</keyword>
<keyword id="KW-0067">ATP-binding</keyword>
<keyword id="KW-0963">Cytoplasm</keyword>
<keyword id="KW-0436">Ligase</keyword>
<keyword id="KW-0547">Nucleotide-binding</keyword>
<keyword id="KW-0648">Protein biosynthesis</keyword>
<keyword id="KW-1185">Reference proteome</keyword>
<protein>
    <recommendedName>
        <fullName evidence="1">Histidine--tRNA ligase</fullName>
        <ecNumber evidence="1">6.1.1.21</ecNumber>
    </recommendedName>
    <alternativeName>
        <fullName evidence="1">Histidyl-tRNA synthetase</fullName>
        <shortName evidence="1">HisRS</shortName>
    </alternativeName>
</protein>
<dbReference type="EC" id="6.1.1.21" evidence="1"/>
<dbReference type="EMBL" id="AE015451">
    <property type="protein sequence ID" value="AAN66479.1"/>
    <property type="molecule type" value="Genomic_DNA"/>
</dbReference>
<dbReference type="RefSeq" id="NP_743015.1">
    <property type="nucleotide sequence ID" value="NC_002947.4"/>
</dbReference>
<dbReference type="RefSeq" id="WP_003248516.1">
    <property type="nucleotide sequence ID" value="NZ_CP169744.1"/>
</dbReference>
<dbReference type="SMR" id="Q88PJ6"/>
<dbReference type="STRING" id="160488.PP_0854"/>
<dbReference type="PaxDb" id="160488-PP_0854"/>
<dbReference type="KEGG" id="ppu:PP_0854"/>
<dbReference type="PATRIC" id="fig|160488.4.peg.915"/>
<dbReference type="eggNOG" id="COG0124">
    <property type="taxonomic scope" value="Bacteria"/>
</dbReference>
<dbReference type="HOGENOM" id="CLU_025113_1_1_6"/>
<dbReference type="OrthoDB" id="9800814at2"/>
<dbReference type="PhylomeDB" id="Q88PJ6"/>
<dbReference type="BioCyc" id="PPUT160488:G1G01-929-MONOMER"/>
<dbReference type="Proteomes" id="UP000000556">
    <property type="component" value="Chromosome"/>
</dbReference>
<dbReference type="GO" id="GO:0005737">
    <property type="term" value="C:cytoplasm"/>
    <property type="evidence" value="ECO:0007669"/>
    <property type="project" value="UniProtKB-SubCell"/>
</dbReference>
<dbReference type="GO" id="GO:0005524">
    <property type="term" value="F:ATP binding"/>
    <property type="evidence" value="ECO:0007669"/>
    <property type="project" value="UniProtKB-UniRule"/>
</dbReference>
<dbReference type="GO" id="GO:0004821">
    <property type="term" value="F:histidine-tRNA ligase activity"/>
    <property type="evidence" value="ECO:0007669"/>
    <property type="project" value="UniProtKB-UniRule"/>
</dbReference>
<dbReference type="GO" id="GO:0006427">
    <property type="term" value="P:histidyl-tRNA aminoacylation"/>
    <property type="evidence" value="ECO:0007669"/>
    <property type="project" value="UniProtKB-UniRule"/>
</dbReference>
<dbReference type="CDD" id="cd00773">
    <property type="entry name" value="HisRS-like_core"/>
    <property type="match status" value="1"/>
</dbReference>
<dbReference type="CDD" id="cd00859">
    <property type="entry name" value="HisRS_anticodon"/>
    <property type="match status" value="1"/>
</dbReference>
<dbReference type="FunFam" id="3.30.930.10:FF:000005">
    <property type="entry name" value="Histidine--tRNA ligase"/>
    <property type="match status" value="1"/>
</dbReference>
<dbReference type="Gene3D" id="3.40.50.800">
    <property type="entry name" value="Anticodon-binding domain"/>
    <property type="match status" value="1"/>
</dbReference>
<dbReference type="Gene3D" id="3.30.930.10">
    <property type="entry name" value="Bira Bifunctional Protein, Domain 2"/>
    <property type="match status" value="1"/>
</dbReference>
<dbReference type="HAMAP" id="MF_00127">
    <property type="entry name" value="His_tRNA_synth"/>
    <property type="match status" value="1"/>
</dbReference>
<dbReference type="InterPro" id="IPR006195">
    <property type="entry name" value="aa-tRNA-synth_II"/>
</dbReference>
<dbReference type="InterPro" id="IPR045864">
    <property type="entry name" value="aa-tRNA-synth_II/BPL/LPL"/>
</dbReference>
<dbReference type="InterPro" id="IPR004154">
    <property type="entry name" value="Anticodon-bd"/>
</dbReference>
<dbReference type="InterPro" id="IPR036621">
    <property type="entry name" value="Anticodon-bd_dom_sf"/>
</dbReference>
<dbReference type="InterPro" id="IPR015807">
    <property type="entry name" value="His-tRNA-ligase"/>
</dbReference>
<dbReference type="InterPro" id="IPR041715">
    <property type="entry name" value="HisRS-like_core"/>
</dbReference>
<dbReference type="InterPro" id="IPR004516">
    <property type="entry name" value="HisRS/HisZ"/>
</dbReference>
<dbReference type="InterPro" id="IPR033656">
    <property type="entry name" value="HisRS_anticodon"/>
</dbReference>
<dbReference type="NCBIfam" id="TIGR00442">
    <property type="entry name" value="hisS"/>
    <property type="match status" value="1"/>
</dbReference>
<dbReference type="PANTHER" id="PTHR43707:SF1">
    <property type="entry name" value="HISTIDINE--TRNA LIGASE, MITOCHONDRIAL-RELATED"/>
    <property type="match status" value="1"/>
</dbReference>
<dbReference type="PANTHER" id="PTHR43707">
    <property type="entry name" value="HISTIDYL-TRNA SYNTHETASE"/>
    <property type="match status" value="1"/>
</dbReference>
<dbReference type="Pfam" id="PF03129">
    <property type="entry name" value="HGTP_anticodon"/>
    <property type="match status" value="1"/>
</dbReference>
<dbReference type="Pfam" id="PF13393">
    <property type="entry name" value="tRNA-synt_His"/>
    <property type="match status" value="1"/>
</dbReference>
<dbReference type="PIRSF" id="PIRSF001549">
    <property type="entry name" value="His-tRNA_synth"/>
    <property type="match status" value="1"/>
</dbReference>
<dbReference type="SUPFAM" id="SSF52954">
    <property type="entry name" value="Class II aaRS ABD-related"/>
    <property type="match status" value="1"/>
</dbReference>
<dbReference type="SUPFAM" id="SSF55681">
    <property type="entry name" value="Class II aaRS and biotin synthetases"/>
    <property type="match status" value="1"/>
</dbReference>
<dbReference type="PROSITE" id="PS50862">
    <property type="entry name" value="AA_TRNA_LIGASE_II"/>
    <property type="match status" value="1"/>
</dbReference>
<reference key="1">
    <citation type="journal article" date="2002" name="Environ. Microbiol.">
        <title>Complete genome sequence and comparative analysis of the metabolically versatile Pseudomonas putida KT2440.</title>
        <authorList>
            <person name="Nelson K.E."/>
            <person name="Weinel C."/>
            <person name="Paulsen I.T."/>
            <person name="Dodson R.J."/>
            <person name="Hilbert H."/>
            <person name="Martins dos Santos V.A.P."/>
            <person name="Fouts D.E."/>
            <person name="Gill S.R."/>
            <person name="Pop M."/>
            <person name="Holmes M."/>
            <person name="Brinkac L.M."/>
            <person name="Beanan M.J."/>
            <person name="DeBoy R.T."/>
            <person name="Daugherty S.C."/>
            <person name="Kolonay J.F."/>
            <person name="Madupu R."/>
            <person name="Nelson W.C."/>
            <person name="White O."/>
            <person name="Peterson J.D."/>
            <person name="Khouri H.M."/>
            <person name="Hance I."/>
            <person name="Chris Lee P."/>
            <person name="Holtzapple E.K."/>
            <person name="Scanlan D."/>
            <person name="Tran K."/>
            <person name="Moazzez A."/>
            <person name="Utterback T.R."/>
            <person name="Rizzo M."/>
            <person name="Lee K."/>
            <person name="Kosack D."/>
            <person name="Moestl D."/>
            <person name="Wedler H."/>
            <person name="Lauber J."/>
            <person name="Stjepandic D."/>
            <person name="Hoheisel J."/>
            <person name="Straetz M."/>
            <person name="Heim S."/>
            <person name="Kiewitz C."/>
            <person name="Eisen J.A."/>
            <person name="Timmis K.N."/>
            <person name="Duesterhoeft A."/>
            <person name="Tuemmler B."/>
            <person name="Fraser C.M."/>
        </authorList>
    </citation>
    <scope>NUCLEOTIDE SEQUENCE [LARGE SCALE GENOMIC DNA]</scope>
    <source>
        <strain>ATCC 47054 / DSM 6125 / CFBP 8728 / NCIMB 11950 / KT2440</strain>
    </source>
</reference>
<feature type="chain" id="PRO_0000136227" description="Histidine--tRNA ligase">
    <location>
        <begin position="1"/>
        <end position="429"/>
    </location>
</feature>
<evidence type="ECO:0000255" key="1">
    <source>
        <dbReference type="HAMAP-Rule" id="MF_00127"/>
    </source>
</evidence>
<sequence>MSKSLQAIRGMNDILPEQSPLWRYFEGTVAGLLDTYGYSQIRTPIVEFTELFKRSIGEVTDIVEKEMYTFEDRNGDSLTLRPEGTAACVRAVLEHGITGNGQVQKLWYIGQMFRHERPQKGRYRQFHQIGVEVFNLDGPDIDAELIMLTWRLWGLLGIQDAVKLELNSLGTSEARARYRDALVEFLSARLEQLDEDSQRRLKSNPLRILDSKDQNTQAVLVGAPKLEDYLDEESRVHFEGLKARLDAAGIPFVINTKLVRGLDYYSKTVFEWVTDKLGAQGTVCAGGRYDGLVEQMGGKPTTGVGFAMGIERLILLLETLGKVPESISRQIDVYLCAFGEQAELAGLRLSEGLRDRLPGLRLAVNAGGGSFKSQFKKADKSGALFALILGDDELAKQEIGLKPLRGQGEQQNIAWDALAEHLETAIAQA</sequence>
<gene>
    <name evidence="1" type="primary">hisS</name>
    <name type="ordered locus">PP_0854</name>
</gene>
<comment type="catalytic activity">
    <reaction evidence="1">
        <text>tRNA(His) + L-histidine + ATP = L-histidyl-tRNA(His) + AMP + diphosphate + H(+)</text>
        <dbReference type="Rhea" id="RHEA:17313"/>
        <dbReference type="Rhea" id="RHEA-COMP:9665"/>
        <dbReference type="Rhea" id="RHEA-COMP:9689"/>
        <dbReference type="ChEBI" id="CHEBI:15378"/>
        <dbReference type="ChEBI" id="CHEBI:30616"/>
        <dbReference type="ChEBI" id="CHEBI:33019"/>
        <dbReference type="ChEBI" id="CHEBI:57595"/>
        <dbReference type="ChEBI" id="CHEBI:78442"/>
        <dbReference type="ChEBI" id="CHEBI:78527"/>
        <dbReference type="ChEBI" id="CHEBI:456215"/>
        <dbReference type="EC" id="6.1.1.21"/>
    </reaction>
</comment>
<comment type="subunit">
    <text evidence="1">Homodimer.</text>
</comment>
<comment type="subcellular location">
    <subcellularLocation>
        <location evidence="1">Cytoplasm</location>
    </subcellularLocation>
</comment>
<comment type="similarity">
    <text evidence="1">Belongs to the class-II aminoacyl-tRNA synthetase family.</text>
</comment>
<name>SYH_PSEPK</name>
<accession>Q88PJ6</accession>
<organism>
    <name type="scientific">Pseudomonas putida (strain ATCC 47054 / DSM 6125 / CFBP 8728 / NCIMB 11950 / KT2440)</name>
    <dbReference type="NCBI Taxonomy" id="160488"/>
    <lineage>
        <taxon>Bacteria</taxon>
        <taxon>Pseudomonadati</taxon>
        <taxon>Pseudomonadota</taxon>
        <taxon>Gammaproteobacteria</taxon>
        <taxon>Pseudomonadales</taxon>
        <taxon>Pseudomonadaceae</taxon>
        <taxon>Pseudomonas</taxon>
    </lineage>
</organism>
<proteinExistence type="inferred from homology"/>